<accession>A3KP40</accession>
<proteinExistence type="evidence at transcript level"/>
<evidence type="ECO:0000256" key="1">
    <source>
        <dbReference type="SAM" id="MobiDB-lite"/>
    </source>
</evidence>
<feature type="chain" id="PRO_0000360148" description="Uncharacterized protein C8orf34 homolog">
    <location>
        <begin position="1"/>
        <end position="618"/>
    </location>
</feature>
<feature type="region of interest" description="Disordered" evidence="1">
    <location>
        <begin position="70"/>
        <end position="118"/>
    </location>
</feature>
<feature type="region of interest" description="Disordered" evidence="1">
    <location>
        <begin position="330"/>
        <end position="352"/>
    </location>
</feature>
<feature type="region of interest" description="Disordered" evidence="1">
    <location>
        <begin position="456"/>
        <end position="552"/>
    </location>
</feature>
<feature type="region of interest" description="Disordered" evidence="1">
    <location>
        <begin position="587"/>
        <end position="618"/>
    </location>
</feature>
<feature type="compositionally biased region" description="Basic and acidic residues" evidence="1">
    <location>
        <begin position="74"/>
        <end position="84"/>
    </location>
</feature>
<feature type="compositionally biased region" description="Basic and acidic residues" evidence="1">
    <location>
        <begin position="333"/>
        <end position="343"/>
    </location>
</feature>
<feature type="compositionally biased region" description="Low complexity" evidence="1">
    <location>
        <begin position="463"/>
        <end position="481"/>
    </location>
</feature>
<feature type="compositionally biased region" description="Polar residues" evidence="1">
    <location>
        <begin position="485"/>
        <end position="516"/>
    </location>
</feature>
<feature type="compositionally biased region" description="Polar residues" evidence="1">
    <location>
        <begin position="609"/>
        <end position="618"/>
    </location>
</feature>
<gene>
    <name type="ORF">zgc:162928</name>
</gene>
<dbReference type="EMBL" id="BC134150">
    <property type="protein sequence ID" value="AAI34151.1"/>
    <property type="molecule type" value="mRNA"/>
</dbReference>
<dbReference type="RefSeq" id="NP_001082968.1">
    <property type="nucleotide sequence ID" value="NM_001089499.1"/>
</dbReference>
<dbReference type="SMR" id="A3KP40"/>
<dbReference type="FunCoup" id="A3KP40">
    <property type="interactions" value="557"/>
</dbReference>
<dbReference type="PaxDb" id="7955-ENSDARP00000116827"/>
<dbReference type="AGR" id="ZFIN:ZDB-GENE-070410-112"/>
<dbReference type="ZFIN" id="ZDB-GENE-070410-112">
    <property type="gene designation" value="zgc:162928"/>
</dbReference>
<dbReference type="eggNOG" id="ENOG502QUHG">
    <property type="taxonomic scope" value="Eukaryota"/>
</dbReference>
<dbReference type="InParanoid" id="A3KP40"/>
<dbReference type="OrthoDB" id="9945857at2759"/>
<dbReference type="PhylomeDB" id="A3KP40"/>
<dbReference type="PRO" id="PR:A3KP40"/>
<dbReference type="Proteomes" id="UP000000437">
    <property type="component" value="Chromosome 24"/>
</dbReference>
<dbReference type="CDD" id="cd22980">
    <property type="entry name" value="DD_VEST1"/>
    <property type="match status" value="1"/>
</dbReference>
<dbReference type="Gene3D" id="1.20.890.10">
    <property type="entry name" value="cAMP-dependent protein kinase regulatory subunit, dimerization-anchoring domain"/>
    <property type="match status" value="1"/>
</dbReference>
<dbReference type="InterPro" id="IPR040687">
    <property type="entry name" value="DUF5586"/>
</dbReference>
<dbReference type="PANTHER" id="PTHR32000:SF3">
    <property type="entry name" value="RIKEN CDNA A830018L16 GENE"/>
    <property type="match status" value="1"/>
</dbReference>
<dbReference type="PANTHER" id="PTHR32000">
    <property type="entry name" value="SIMILAR TO HYPOTHETICAL PROTEIN"/>
    <property type="match status" value="1"/>
</dbReference>
<dbReference type="Pfam" id="PF17824">
    <property type="entry name" value="DUF5586"/>
    <property type="match status" value="1"/>
</dbReference>
<dbReference type="SUPFAM" id="SSF47391">
    <property type="entry name" value="Dimerization-anchoring domain of cAMP-dependent PK regulatory subunit"/>
    <property type="match status" value="1"/>
</dbReference>
<sequence length="618" mass="68794">MASLQQSRIQSYLEKNKIGPLFEEMMTKLITETPDHPIPFLIGHLQTKQESPGRIQRTLSGSAALWAEGSSEYKGTRRDSRGYEKPWQIHPKKPKKSKSDLAVSNISPPSPESKSLPRSILRPTWDWRTKPESRGFDELNHILLESKKLGKALENLSRSIAVSDDFDLDPRAYNSVLRPRVVGEWVGREEEDLDPLAAEMFQPPVPRAKTEGWTSKDNSPVGSLKMETKGKGLKQQQQNHKKLLAAMLSQDSFDSMPDSAPSVTEDEMEDEDDAMELLEDLDDLRMEGVTGLLQSGSKFSQGRSSYYTEPQAKVTLNICSRCARLQGDSLTARTEEEPERHVPEQAVPEVPCPLPTVTETLTATEDLQTASQVTGLRHPVWASDVKPIRGTSPQTARRALQLQDSLFSKELENMGKHLAEVEKDLAKLAEQGKLNRSPNSPHRSLLLPPLFHTTNTLPVLGQTSRPQSPSSLSSKTTGLPLHNPKPTSLMTDRTSPSNSSSRAQTPSRPITPNSLMMRSFTAAGHGNKERVYGRSRSRPVTPTGQITRPILTPPGLSTTDLYGGLWSTLTEDEFYQQLQAVRKPWRIPSDAESDCLDPPEQDKCEFYTSDPSHSLKTL</sequence>
<name>CH034_DANRE</name>
<keyword id="KW-1185">Reference proteome</keyword>
<organism>
    <name type="scientific">Danio rerio</name>
    <name type="common">Zebrafish</name>
    <name type="synonym">Brachydanio rerio</name>
    <dbReference type="NCBI Taxonomy" id="7955"/>
    <lineage>
        <taxon>Eukaryota</taxon>
        <taxon>Metazoa</taxon>
        <taxon>Chordata</taxon>
        <taxon>Craniata</taxon>
        <taxon>Vertebrata</taxon>
        <taxon>Euteleostomi</taxon>
        <taxon>Actinopterygii</taxon>
        <taxon>Neopterygii</taxon>
        <taxon>Teleostei</taxon>
        <taxon>Ostariophysi</taxon>
        <taxon>Cypriniformes</taxon>
        <taxon>Danionidae</taxon>
        <taxon>Danioninae</taxon>
        <taxon>Danio</taxon>
    </lineage>
</organism>
<reference key="1">
    <citation type="submission" date="2007-03" db="EMBL/GenBank/DDBJ databases">
        <authorList>
            <consortium name="NIH - Zebrafish Gene Collection (ZGC) project"/>
        </authorList>
    </citation>
    <scope>NUCLEOTIDE SEQUENCE [LARGE SCALE MRNA]</scope>
    <source>
        <tissue>Testis</tissue>
    </source>
</reference>
<protein>
    <recommendedName>
        <fullName>Uncharacterized protein C8orf34 homolog</fullName>
    </recommendedName>
</protein>